<name>KTHY_THEVO</name>
<proteinExistence type="inferred from homology"/>
<accession>Q97CC8</accession>
<organism>
    <name type="scientific">Thermoplasma volcanium (strain ATCC 51530 / DSM 4299 / JCM 9571 / NBRC 15438 / GSS1)</name>
    <dbReference type="NCBI Taxonomy" id="273116"/>
    <lineage>
        <taxon>Archaea</taxon>
        <taxon>Methanobacteriati</taxon>
        <taxon>Thermoplasmatota</taxon>
        <taxon>Thermoplasmata</taxon>
        <taxon>Thermoplasmatales</taxon>
        <taxon>Thermoplasmataceae</taxon>
        <taxon>Thermoplasma</taxon>
    </lineage>
</organism>
<dbReference type="EC" id="2.7.4.9" evidence="1"/>
<dbReference type="EMBL" id="BA000011">
    <property type="protein sequence ID" value="BAB59316.1"/>
    <property type="molecule type" value="Genomic_DNA"/>
</dbReference>
<dbReference type="RefSeq" id="WP_010916429.1">
    <property type="nucleotide sequence ID" value="NC_002689.2"/>
</dbReference>
<dbReference type="SMR" id="Q97CC8"/>
<dbReference type="STRING" id="273116.gene:9380944"/>
<dbReference type="PaxDb" id="273116-14324388"/>
<dbReference type="GeneID" id="1441659"/>
<dbReference type="KEGG" id="tvo:TVG0181531"/>
<dbReference type="eggNOG" id="arCOG01891">
    <property type="taxonomic scope" value="Archaea"/>
</dbReference>
<dbReference type="HOGENOM" id="CLU_049131_1_3_2"/>
<dbReference type="OrthoDB" id="43083at2157"/>
<dbReference type="PhylomeDB" id="Q97CC8"/>
<dbReference type="Proteomes" id="UP000001017">
    <property type="component" value="Chromosome"/>
</dbReference>
<dbReference type="GO" id="GO:0005829">
    <property type="term" value="C:cytosol"/>
    <property type="evidence" value="ECO:0007669"/>
    <property type="project" value="TreeGrafter"/>
</dbReference>
<dbReference type="GO" id="GO:0005524">
    <property type="term" value="F:ATP binding"/>
    <property type="evidence" value="ECO:0007669"/>
    <property type="project" value="UniProtKB-UniRule"/>
</dbReference>
<dbReference type="GO" id="GO:0004798">
    <property type="term" value="F:dTMP kinase activity"/>
    <property type="evidence" value="ECO:0007669"/>
    <property type="project" value="UniProtKB-UniRule"/>
</dbReference>
<dbReference type="GO" id="GO:0006233">
    <property type="term" value="P:dTDP biosynthetic process"/>
    <property type="evidence" value="ECO:0007669"/>
    <property type="project" value="InterPro"/>
</dbReference>
<dbReference type="GO" id="GO:0006235">
    <property type="term" value="P:dTTP biosynthetic process"/>
    <property type="evidence" value="ECO:0007669"/>
    <property type="project" value="UniProtKB-UniRule"/>
</dbReference>
<dbReference type="GO" id="GO:0006227">
    <property type="term" value="P:dUDP biosynthetic process"/>
    <property type="evidence" value="ECO:0007669"/>
    <property type="project" value="TreeGrafter"/>
</dbReference>
<dbReference type="CDD" id="cd01672">
    <property type="entry name" value="TMPK"/>
    <property type="match status" value="1"/>
</dbReference>
<dbReference type="Gene3D" id="3.40.50.300">
    <property type="entry name" value="P-loop containing nucleotide triphosphate hydrolases"/>
    <property type="match status" value="1"/>
</dbReference>
<dbReference type="HAMAP" id="MF_00165">
    <property type="entry name" value="Thymidylate_kinase"/>
    <property type="match status" value="1"/>
</dbReference>
<dbReference type="InterPro" id="IPR027417">
    <property type="entry name" value="P-loop_NTPase"/>
</dbReference>
<dbReference type="InterPro" id="IPR039430">
    <property type="entry name" value="Thymidylate_kin-like_dom"/>
</dbReference>
<dbReference type="InterPro" id="IPR018094">
    <property type="entry name" value="Thymidylate_kinase"/>
</dbReference>
<dbReference type="NCBIfam" id="TIGR00041">
    <property type="entry name" value="DTMP_kinase"/>
    <property type="match status" value="1"/>
</dbReference>
<dbReference type="PANTHER" id="PTHR10344">
    <property type="entry name" value="THYMIDYLATE KINASE"/>
    <property type="match status" value="1"/>
</dbReference>
<dbReference type="PANTHER" id="PTHR10344:SF4">
    <property type="entry name" value="UMP-CMP KINASE 2, MITOCHONDRIAL"/>
    <property type="match status" value="1"/>
</dbReference>
<dbReference type="Pfam" id="PF02223">
    <property type="entry name" value="Thymidylate_kin"/>
    <property type="match status" value="1"/>
</dbReference>
<dbReference type="SUPFAM" id="SSF52540">
    <property type="entry name" value="P-loop containing nucleoside triphosphate hydrolases"/>
    <property type="match status" value="1"/>
</dbReference>
<gene>
    <name evidence="1" type="primary">tmk</name>
    <name type="ordered locus">TV0174</name>
    <name type="ORF">TVG0181531</name>
</gene>
<reference key="1">
    <citation type="journal article" date="2000" name="Proc. Natl. Acad. Sci. U.S.A.">
        <title>Archaeal adaptation to higher temperatures revealed by genomic sequence of Thermoplasma volcanium.</title>
        <authorList>
            <person name="Kawashima T."/>
            <person name="Amano N."/>
            <person name="Koike H."/>
            <person name="Makino S."/>
            <person name="Higuchi S."/>
            <person name="Kawashima-Ohya Y."/>
            <person name="Watanabe K."/>
            <person name="Yamazaki M."/>
            <person name="Kanehori K."/>
            <person name="Kawamoto T."/>
            <person name="Nunoshiba T."/>
            <person name="Yamamoto Y."/>
            <person name="Aramaki H."/>
            <person name="Makino K."/>
            <person name="Suzuki M."/>
        </authorList>
    </citation>
    <scope>NUCLEOTIDE SEQUENCE [LARGE SCALE GENOMIC DNA]</scope>
    <source>
        <strain>ATCC 51530 / DSM 4299 / JCM 9571 / NBRC 15438 / GSS1</strain>
    </source>
</reference>
<comment type="catalytic activity">
    <reaction evidence="1">
        <text>dTMP + ATP = dTDP + ADP</text>
        <dbReference type="Rhea" id="RHEA:13517"/>
        <dbReference type="ChEBI" id="CHEBI:30616"/>
        <dbReference type="ChEBI" id="CHEBI:58369"/>
        <dbReference type="ChEBI" id="CHEBI:63528"/>
        <dbReference type="ChEBI" id="CHEBI:456216"/>
        <dbReference type="EC" id="2.7.4.9"/>
    </reaction>
</comment>
<comment type="similarity">
    <text evidence="1">Belongs to the thymidylate kinase family.</text>
</comment>
<evidence type="ECO:0000255" key="1">
    <source>
        <dbReference type="HAMAP-Rule" id="MF_00165"/>
    </source>
</evidence>
<feature type="chain" id="PRO_0000155403" description="Probable thymidylate kinase">
    <location>
        <begin position="1"/>
        <end position="190"/>
    </location>
</feature>
<feature type="binding site" evidence="1">
    <location>
        <begin position="7"/>
        <end position="14"/>
    </location>
    <ligand>
        <name>ATP</name>
        <dbReference type="ChEBI" id="CHEBI:30616"/>
    </ligand>
</feature>
<keyword id="KW-0067">ATP-binding</keyword>
<keyword id="KW-0418">Kinase</keyword>
<keyword id="KW-0545">Nucleotide biosynthesis</keyword>
<keyword id="KW-0547">Nucleotide-binding</keyword>
<keyword id="KW-0808">Transferase</keyword>
<protein>
    <recommendedName>
        <fullName evidence="1">Probable thymidylate kinase</fullName>
        <ecNumber evidence="1">2.7.4.9</ecNumber>
    </recommendedName>
    <alternativeName>
        <fullName evidence="1">dTMP kinase</fullName>
    </alternativeName>
</protein>
<sequence length="190" mass="21863">MFIAVEGIDGAGKTTLAKSLSSLLEKEGFRVFLTREPTDDIRNYEGDDVELFIKFTLDRYKHQKEIRKKLNEGFVVISDRYIRSSYAYEMKGAAAALGSEEKAKEWMDCVSNIITIRPDINILVQVDVQVGLDRISKRNGTITHFEQRERLNEALKIYNSFDWDIKVDGTDPLDKITNEVYLYLKNKIGL</sequence>